<organism>
    <name type="scientific">Exiguobacterium sibiricum (strain DSM 17290 / CCUG 55495 / CIP 109462 / JCM 13490 / 255-15)</name>
    <dbReference type="NCBI Taxonomy" id="262543"/>
    <lineage>
        <taxon>Bacteria</taxon>
        <taxon>Bacillati</taxon>
        <taxon>Bacillota</taxon>
        <taxon>Bacilli</taxon>
        <taxon>Bacillales</taxon>
        <taxon>Bacillales Family XII. Incertae Sedis</taxon>
        <taxon>Exiguobacterium</taxon>
    </lineage>
</organism>
<keyword id="KW-0963">Cytoplasm</keyword>
<keyword id="KW-1185">Reference proteome</keyword>
<keyword id="KW-0704">Schiff base</keyword>
<keyword id="KW-0784">Thiamine biosynthesis</keyword>
<keyword id="KW-0808">Transferase</keyword>
<reference key="1">
    <citation type="submission" date="2008-04" db="EMBL/GenBank/DDBJ databases">
        <title>Complete sequence of chromosome of Exiguobacterium sibiricum 255-15.</title>
        <authorList>
            <consortium name="US DOE Joint Genome Institute"/>
            <person name="Copeland A."/>
            <person name="Lucas S."/>
            <person name="Lapidus A."/>
            <person name="Glavina del Rio T."/>
            <person name="Dalin E."/>
            <person name="Tice H."/>
            <person name="Bruce D."/>
            <person name="Goodwin L."/>
            <person name="Pitluck S."/>
            <person name="Kiss H."/>
            <person name="Chertkov O."/>
            <person name="Monk C."/>
            <person name="Brettin T."/>
            <person name="Detter J.C."/>
            <person name="Han C."/>
            <person name="Kuske C.R."/>
            <person name="Schmutz J."/>
            <person name="Larimer F."/>
            <person name="Land M."/>
            <person name="Hauser L."/>
            <person name="Kyrpides N."/>
            <person name="Mikhailova N."/>
            <person name="Vishnivetskaya T."/>
            <person name="Rodrigues D.F."/>
            <person name="Gilichinsky D."/>
            <person name="Tiedje J."/>
            <person name="Richardson P."/>
        </authorList>
    </citation>
    <scope>NUCLEOTIDE SEQUENCE [LARGE SCALE GENOMIC DNA]</scope>
    <source>
        <strain>DSM 17290 / CCUG 55495 / CIP 109462 / JCM 13490 / 255-15</strain>
    </source>
</reference>
<proteinExistence type="inferred from homology"/>
<gene>
    <name evidence="1" type="primary">thiG</name>
    <name type="ordered locus">Exig_1201</name>
</gene>
<evidence type="ECO:0000255" key="1">
    <source>
        <dbReference type="HAMAP-Rule" id="MF_00443"/>
    </source>
</evidence>
<dbReference type="EC" id="2.8.1.10" evidence="1"/>
<dbReference type="EMBL" id="CP001022">
    <property type="protein sequence ID" value="ACB60680.1"/>
    <property type="molecule type" value="Genomic_DNA"/>
</dbReference>
<dbReference type="RefSeq" id="WP_012370101.1">
    <property type="nucleotide sequence ID" value="NC_010556.1"/>
</dbReference>
<dbReference type="SMR" id="B1YES2"/>
<dbReference type="STRING" id="262543.Exig_1201"/>
<dbReference type="KEGG" id="esi:Exig_1201"/>
<dbReference type="eggNOG" id="COG2022">
    <property type="taxonomic scope" value="Bacteria"/>
</dbReference>
<dbReference type="HOGENOM" id="CLU_062233_1_0_9"/>
<dbReference type="OrthoDB" id="9805935at2"/>
<dbReference type="UniPathway" id="UPA00060"/>
<dbReference type="Proteomes" id="UP000001681">
    <property type="component" value="Chromosome"/>
</dbReference>
<dbReference type="GO" id="GO:0005737">
    <property type="term" value="C:cytoplasm"/>
    <property type="evidence" value="ECO:0007669"/>
    <property type="project" value="UniProtKB-SubCell"/>
</dbReference>
<dbReference type="GO" id="GO:1990107">
    <property type="term" value="F:thiazole synthase activity"/>
    <property type="evidence" value="ECO:0007669"/>
    <property type="project" value="UniProtKB-EC"/>
</dbReference>
<dbReference type="GO" id="GO:0009229">
    <property type="term" value="P:thiamine diphosphate biosynthetic process"/>
    <property type="evidence" value="ECO:0007669"/>
    <property type="project" value="UniProtKB-UniRule"/>
</dbReference>
<dbReference type="CDD" id="cd04728">
    <property type="entry name" value="ThiG"/>
    <property type="match status" value="1"/>
</dbReference>
<dbReference type="FunFam" id="3.20.20.70:FF:000049">
    <property type="entry name" value="Thiazole synthase"/>
    <property type="match status" value="1"/>
</dbReference>
<dbReference type="Gene3D" id="3.20.20.70">
    <property type="entry name" value="Aldolase class I"/>
    <property type="match status" value="1"/>
</dbReference>
<dbReference type="HAMAP" id="MF_00443">
    <property type="entry name" value="ThiG"/>
    <property type="match status" value="1"/>
</dbReference>
<dbReference type="InterPro" id="IPR013785">
    <property type="entry name" value="Aldolase_TIM"/>
</dbReference>
<dbReference type="InterPro" id="IPR033983">
    <property type="entry name" value="Thiazole_synthase_ThiG"/>
</dbReference>
<dbReference type="InterPro" id="IPR008867">
    <property type="entry name" value="ThiG"/>
</dbReference>
<dbReference type="PANTHER" id="PTHR34266">
    <property type="entry name" value="THIAZOLE SYNTHASE"/>
    <property type="match status" value="1"/>
</dbReference>
<dbReference type="PANTHER" id="PTHR34266:SF2">
    <property type="entry name" value="THIAZOLE SYNTHASE"/>
    <property type="match status" value="1"/>
</dbReference>
<dbReference type="Pfam" id="PF05690">
    <property type="entry name" value="ThiG"/>
    <property type="match status" value="1"/>
</dbReference>
<dbReference type="SUPFAM" id="SSF110399">
    <property type="entry name" value="ThiG-like"/>
    <property type="match status" value="1"/>
</dbReference>
<name>THIG_EXIS2</name>
<sequence length="255" mass="26892">MLEIGGKTFASRLLLGTGKYPDATTQQQAVEASGTNILTFSVRRLDVFAKGQTNPLAALDLNRYDLLPNTAGAKTAEEAVRLARLARASGMCDMVKVEVIGCDKTLLPDPVETLRASEELIKDGFIVLPYTSDDLLLARRLEELGCHAIMPAASPIGSGQGILNPLALSFIIEQLTVPVIVDAGIGSPADVAYAMELGADAVLLNSAVAHSGDPVKMAQAMKLAVEAGRLGFEAGRIEKKRYATASSPMTGISRP</sequence>
<feature type="chain" id="PRO_1000196864" description="Thiazole synthase">
    <location>
        <begin position="1"/>
        <end position="255"/>
    </location>
</feature>
<feature type="active site" description="Schiff-base intermediate with DXP" evidence="1">
    <location>
        <position position="96"/>
    </location>
</feature>
<feature type="binding site" evidence="1">
    <location>
        <position position="157"/>
    </location>
    <ligand>
        <name>1-deoxy-D-xylulose 5-phosphate</name>
        <dbReference type="ChEBI" id="CHEBI:57792"/>
    </ligand>
</feature>
<feature type="binding site" evidence="1">
    <location>
        <begin position="183"/>
        <end position="184"/>
    </location>
    <ligand>
        <name>1-deoxy-D-xylulose 5-phosphate</name>
        <dbReference type="ChEBI" id="CHEBI:57792"/>
    </ligand>
</feature>
<feature type="binding site" evidence="1">
    <location>
        <begin position="205"/>
        <end position="206"/>
    </location>
    <ligand>
        <name>1-deoxy-D-xylulose 5-phosphate</name>
        <dbReference type="ChEBI" id="CHEBI:57792"/>
    </ligand>
</feature>
<comment type="function">
    <text evidence="1">Catalyzes the rearrangement of 1-deoxy-D-xylulose 5-phosphate (DXP) to produce the thiazole phosphate moiety of thiamine. Sulfur is provided by the thiocarboxylate moiety of the carrier protein ThiS. In vitro, sulfur can be provided by H(2)S.</text>
</comment>
<comment type="catalytic activity">
    <reaction evidence="1">
        <text>[ThiS sulfur-carrier protein]-C-terminal-Gly-aminoethanethioate + 2-iminoacetate + 1-deoxy-D-xylulose 5-phosphate = [ThiS sulfur-carrier protein]-C-terminal Gly-Gly + 2-[(2R,5Z)-2-carboxy-4-methylthiazol-5(2H)-ylidene]ethyl phosphate + 2 H2O + H(+)</text>
        <dbReference type="Rhea" id="RHEA:26297"/>
        <dbReference type="Rhea" id="RHEA-COMP:12909"/>
        <dbReference type="Rhea" id="RHEA-COMP:19908"/>
        <dbReference type="ChEBI" id="CHEBI:15377"/>
        <dbReference type="ChEBI" id="CHEBI:15378"/>
        <dbReference type="ChEBI" id="CHEBI:57792"/>
        <dbReference type="ChEBI" id="CHEBI:62899"/>
        <dbReference type="ChEBI" id="CHEBI:77846"/>
        <dbReference type="ChEBI" id="CHEBI:90778"/>
        <dbReference type="ChEBI" id="CHEBI:232372"/>
        <dbReference type="EC" id="2.8.1.10"/>
    </reaction>
</comment>
<comment type="pathway">
    <text evidence="1">Cofactor biosynthesis; thiamine diphosphate biosynthesis.</text>
</comment>
<comment type="subunit">
    <text evidence="1">Homotetramer. Forms heterodimers with either ThiH or ThiS.</text>
</comment>
<comment type="subcellular location">
    <subcellularLocation>
        <location evidence="1">Cytoplasm</location>
    </subcellularLocation>
</comment>
<comment type="similarity">
    <text evidence="1">Belongs to the ThiG family.</text>
</comment>
<accession>B1YES2</accession>
<protein>
    <recommendedName>
        <fullName evidence="1">Thiazole synthase</fullName>
        <ecNumber evidence="1">2.8.1.10</ecNumber>
    </recommendedName>
</protein>